<sequence length="337" mass="36321">MNAPSLPRLAMVLGDPAGIGPELIARLLADTEVREKAHIVLIADEAEMRRGMRIAGCEFPYRRIDALETLDFADATPLLHPWLSQGGDEFPRSEASAVGGRYSLETLALALELTRSGRTDAILFGPLNKTSLHMAGMDHSDELHWFAERLGFGGPFCEFNVLDDLWTSRVTSHVALAEVPGLLSQERVGEAIRLIDDALRRSGLARPRIGVCGLNPHNGDNGSFGREELDIIAPAVQKAREQGIAADGPYPADTIFLKVQGDARAFDAVVTMYHDQGQIAIKLMGFSRGVTVQGGLPIPIATPAHGTAFDIAGQGRADVGATRQAFEIACRMGRHKA</sequence>
<organism>
    <name type="scientific">Pseudomonas aeruginosa (strain ATCC 15692 / DSM 22644 / CIP 104116 / JCM 14847 / LMG 12228 / 1C / PRS 101 / PAO1)</name>
    <dbReference type="NCBI Taxonomy" id="208964"/>
    <lineage>
        <taxon>Bacteria</taxon>
        <taxon>Pseudomonadati</taxon>
        <taxon>Pseudomonadota</taxon>
        <taxon>Gammaproteobacteria</taxon>
        <taxon>Pseudomonadales</taxon>
        <taxon>Pseudomonadaceae</taxon>
        <taxon>Pseudomonas</taxon>
    </lineage>
</organism>
<keyword id="KW-0170">Cobalt</keyword>
<keyword id="KW-0963">Cytoplasm</keyword>
<keyword id="KW-0460">Magnesium</keyword>
<keyword id="KW-0479">Metal-binding</keyword>
<keyword id="KW-0520">NAD</keyword>
<keyword id="KW-0521">NADP</keyword>
<keyword id="KW-0560">Oxidoreductase</keyword>
<keyword id="KW-0664">Pyridoxine biosynthesis</keyword>
<keyword id="KW-1185">Reference proteome</keyword>
<keyword id="KW-0862">Zinc</keyword>
<evidence type="ECO:0000250" key="1">
    <source>
        <dbReference type="UniProtKB" id="P19624"/>
    </source>
</evidence>
<evidence type="ECO:0000305" key="2"/>
<reference key="1">
    <citation type="journal article" date="2000" name="Nature">
        <title>Complete genome sequence of Pseudomonas aeruginosa PAO1, an opportunistic pathogen.</title>
        <authorList>
            <person name="Stover C.K."/>
            <person name="Pham X.-Q.T."/>
            <person name="Erwin A.L."/>
            <person name="Mizoguchi S.D."/>
            <person name="Warrener P."/>
            <person name="Hickey M.J."/>
            <person name="Brinkman F.S.L."/>
            <person name="Hufnagle W.O."/>
            <person name="Kowalik D.J."/>
            <person name="Lagrou M."/>
            <person name="Garber R.L."/>
            <person name="Goltry L."/>
            <person name="Tolentino E."/>
            <person name="Westbrock-Wadman S."/>
            <person name="Yuan Y."/>
            <person name="Brody L.L."/>
            <person name="Coulter S.N."/>
            <person name="Folger K.R."/>
            <person name="Kas A."/>
            <person name="Larbig K."/>
            <person name="Lim R.M."/>
            <person name="Smith K.A."/>
            <person name="Spencer D.H."/>
            <person name="Wong G.K.-S."/>
            <person name="Wu Z."/>
            <person name="Paulsen I.T."/>
            <person name="Reizer J."/>
            <person name="Saier M.H. Jr."/>
            <person name="Hancock R.E.W."/>
            <person name="Lory S."/>
            <person name="Olson M.V."/>
        </authorList>
    </citation>
    <scope>NUCLEOTIDE SEQUENCE [LARGE SCALE GENOMIC DNA]</scope>
    <source>
        <strain>ATCC 15692 / DSM 22644 / CIP 104116 / JCM 14847 / LMG 12228 / 1C / PRS 101 / PAO1</strain>
    </source>
</reference>
<feature type="chain" id="PRO_0000188816" description="Putative 4-hydroxythreonine-4-phosphate dehydrogenase 2">
    <location>
        <begin position="1"/>
        <end position="337"/>
    </location>
</feature>
<feature type="binding site" evidence="1">
    <location>
        <position position="173"/>
    </location>
    <ligand>
        <name>a divalent metal cation</name>
        <dbReference type="ChEBI" id="CHEBI:60240"/>
        <note>ligand shared between dimeric partners</note>
    </ligand>
</feature>
<feature type="binding site" evidence="1">
    <location>
        <position position="217"/>
    </location>
    <ligand>
        <name>a divalent metal cation</name>
        <dbReference type="ChEBI" id="CHEBI:60240"/>
        <note>ligand shared between dimeric partners</note>
    </ligand>
</feature>
<feature type="binding site" evidence="1">
    <location>
        <position position="274"/>
    </location>
    <ligand>
        <name>a divalent metal cation</name>
        <dbReference type="ChEBI" id="CHEBI:60240"/>
        <note>ligand shared between dimeric partners</note>
    </ligand>
</feature>
<accession>Q9I1Q5</accession>
<gene>
    <name type="ordered locus">PA2212</name>
</gene>
<protein>
    <recommendedName>
        <fullName evidence="1">Putative 4-hydroxythreonine-4-phosphate dehydrogenase 2</fullName>
        <ecNumber evidence="1">1.1.1.262</ecNumber>
    </recommendedName>
    <alternativeName>
        <fullName evidence="1">4-(phosphohydroxy)-L-threonine dehydrogenase 2</fullName>
    </alternativeName>
</protein>
<dbReference type="EC" id="1.1.1.262" evidence="1"/>
<dbReference type="EMBL" id="AE004091">
    <property type="protein sequence ID" value="AAG05600.1"/>
    <property type="molecule type" value="Genomic_DNA"/>
</dbReference>
<dbReference type="PIR" id="C83370">
    <property type="entry name" value="C83370"/>
</dbReference>
<dbReference type="RefSeq" id="NP_250902.1">
    <property type="nucleotide sequence ID" value="NC_002516.2"/>
</dbReference>
<dbReference type="RefSeq" id="WP_003113700.1">
    <property type="nucleotide sequence ID" value="NZ_QZGE01000014.1"/>
</dbReference>
<dbReference type="SMR" id="Q9I1Q5"/>
<dbReference type="STRING" id="208964.PA2212"/>
<dbReference type="PaxDb" id="208964-PA2212"/>
<dbReference type="DNASU" id="881915"/>
<dbReference type="GeneID" id="881915"/>
<dbReference type="KEGG" id="pae:PA2212"/>
<dbReference type="PATRIC" id="fig|208964.12.peg.2316"/>
<dbReference type="PseudoCAP" id="PA2212"/>
<dbReference type="HOGENOM" id="CLU_040168_0_1_6"/>
<dbReference type="InParanoid" id="Q9I1Q5"/>
<dbReference type="OrthoDB" id="9801783at2"/>
<dbReference type="PhylomeDB" id="Q9I1Q5"/>
<dbReference type="BioCyc" id="PAER208964:G1FZ6-2252-MONOMER"/>
<dbReference type="UniPathway" id="UPA00244">
    <property type="reaction ID" value="UER00312"/>
</dbReference>
<dbReference type="Proteomes" id="UP000002438">
    <property type="component" value="Chromosome"/>
</dbReference>
<dbReference type="GO" id="GO:0005737">
    <property type="term" value="C:cytoplasm"/>
    <property type="evidence" value="ECO:0007669"/>
    <property type="project" value="UniProtKB-SubCell"/>
</dbReference>
<dbReference type="GO" id="GO:0050570">
    <property type="term" value="F:4-hydroxythreonine-4-phosphate dehydrogenase activity"/>
    <property type="evidence" value="ECO:0007669"/>
    <property type="project" value="UniProtKB-EC"/>
</dbReference>
<dbReference type="GO" id="GO:0046872">
    <property type="term" value="F:metal ion binding"/>
    <property type="evidence" value="ECO:0007669"/>
    <property type="project" value="UniProtKB-KW"/>
</dbReference>
<dbReference type="GO" id="GO:0051287">
    <property type="term" value="F:NAD binding"/>
    <property type="evidence" value="ECO:0007669"/>
    <property type="project" value="InterPro"/>
</dbReference>
<dbReference type="GO" id="GO:0008615">
    <property type="term" value="P:pyridoxine biosynthetic process"/>
    <property type="evidence" value="ECO:0007669"/>
    <property type="project" value="UniProtKB-KW"/>
</dbReference>
<dbReference type="Gene3D" id="3.40.718.10">
    <property type="entry name" value="Isopropylmalate Dehydrogenase"/>
    <property type="match status" value="1"/>
</dbReference>
<dbReference type="InterPro" id="IPR005255">
    <property type="entry name" value="PdxA_fam"/>
</dbReference>
<dbReference type="PANTHER" id="PTHR30004">
    <property type="entry name" value="4-HYDROXYTHREONINE-4-PHOSPHATE DEHYDROGENASE"/>
    <property type="match status" value="1"/>
</dbReference>
<dbReference type="PANTHER" id="PTHR30004:SF3">
    <property type="entry name" value="4-HYDROXYTHREONINE-4-PHOSPHATE DEHYDROGENASE 2-RELATED"/>
    <property type="match status" value="1"/>
</dbReference>
<dbReference type="Pfam" id="PF04166">
    <property type="entry name" value="PdxA"/>
    <property type="match status" value="1"/>
</dbReference>
<dbReference type="SUPFAM" id="SSF53659">
    <property type="entry name" value="Isocitrate/Isopropylmalate dehydrogenase-like"/>
    <property type="match status" value="1"/>
</dbReference>
<comment type="function">
    <text evidence="1">Catalyzes the NAD(P)-dependent oxidation of 4-(phosphooxy)-L-threonine (HTP) into 2-amino-3-oxo-4-(phosphooxy)butyric acid which spontaneously decarboxylates to form 3-amino-2-oxopropyl phosphate (AHAP).</text>
</comment>
<comment type="catalytic activity">
    <reaction evidence="1">
        <text>4-(phosphooxy)-L-threonine + NAD(+) = 3-amino-2-oxopropyl phosphate + CO2 + NADH</text>
        <dbReference type="Rhea" id="RHEA:32275"/>
        <dbReference type="ChEBI" id="CHEBI:16526"/>
        <dbReference type="ChEBI" id="CHEBI:57279"/>
        <dbReference type="ChEBI" id="CHEBI:57540"/>
        <dbReference type="ChEBI" id="CHEBI:57945"/>
        <dbReference type="ChEBI" id="CHEBI:58452"/>
        <dbReference type="EC" id="1.1.1.262"/>
    </reaction>
</comment>
<comment type="cofactor">
    <cofactor evidence="1">
        <name>Zn(2+)</name>
        <dbReference type="ChEBI" id="CHEBI:29105"/>
    </cofactor>
    <cofactor evidence="1">
        <name>Mg(2+)</name>
        <dbReference type="ChEBI" id="CHEBI:18420"/>
    </cofactor>
    <cofactor evidence="1">
        <name>Co(2+)</name>
        <dbReference type="ChEBI" id="CHEBI:48828"/>
    </cofactor>
    <text evidence="1">Binds 1 divalent metal cation per subunit. Can use ions such as Zn(2+), Mg(2+) or Co(2+).</text>
</comment>
<comment type="pathway">
    <text evidence="1">Cofactor biosynthesis; pyridoxine 5'-phosphate biosynthesis; pyridoxine 5'-phosphate from D-erythrose 4-phosphate: step 4/5.</text>
</comment>
<comment type="subunit">
    <text evidence="1">Homodimer.</text>
</comment>
<comment type="subcellular location">
    <subcellularLocation>
        <location evidence="1">Cytoplasm</location>
    </subcellularLocation>
</comment>
<comment type="miscellaneous">
    <text evidence="1">The active site is located at the dimer interface.</text>
</comment>
<comment type="similarity">
    <text evidence="2">Belongs to the PdxA family.</text>
</comment>
<name>PDXAL_PSEAE</name>
<proteinExistence type="inferred from homology"/>